<organism>
    <name type="scientific">Eucalyptus globulus subsp. globulus</name>
    <name type="common">Tasmanian blue gum</name>
    <dbReference type="NCBI Taxonomy" id="71271"/>
    <lineage>
        <taxon>Eukaryota</taxon>
        <taxon>Viridiplantae</taxon>
        <taxon>Streptophyta</taxon>
        <taxon>Embryophyta</taxon>
        <taxon>Tracheophyta</taxon>
        <taxon>Spermatophyta</taxon>
        <taxon>Magnoliopsida</taxon>
        <taxon>eudicotyledons</taxon>
        <taxon>Gunneridae</taxon>
        <taxon>Pentapetalae</taxon>
        <taxon>rosids</taxon>
        <taxon>malvids</taxon>
        <taxon>Myrtales</taxon>
        <taxon>Myrtaceae</taxon>
        <taxon>Myrtoideae</taxon>
        <taxon>Eucalypteae</taxon>
        <taxon>Eucalyptus</taxon>
    </lineage>
</organism>
<protein>
    <recommendedName>
        <fullName evidence="1">ATP synthase subunit alpha, chloroplastic</fullName>
        <ecNumber evidence="1">7.1.2.2</ecNumber>
    </recommendedName>
    <alternativeName>
        <fullName evidence="1">ATP synthase F1 sector subunit alpha</fullName>
    </alternativeName>
    <alternativeName>
        <fullName evidence="1">F-ATPase subunit alpha</fullName>
    </alternativeName>
</protein>
<reference key="1">
    <citation type="journal article" date="2005" name="DNA Res.">
        <title>Complete nucleotide sequence of the chloroplast genome from the Tasmanian blue gum, Eucalyptus globulus (Myrtaceae).</title>
        <authorList>
            <person name="Steane D.A."/>
        </authorList>
    </citation>
    <scope>NUCLEOTIDE SEQUENCE [LARGE SCALE GENOMIC DNA]</scope>
</reference>
<feature type="chain" id="PRO_0000238421" description="ATP synthase subunit alpha, chloroplastic">
    <location>
        <begin position="1"/>
        <end position="507"/>
    </location>
</feature>
<feature type="binding site" evidence="1">
    <location>
        <begin position="170"/>
        <end position="177"/>
    </location>
    <ligand>
        <name>ATP</name>
        <dbReference type="ChEBI" id="CHEBI:30616"/>
    </ligand>
</feature>
<feature type="site" description="Required for activity" evidence="1">
    <location>
        <position position="363"/>
    </location>
</feature>
<sequence length="507" mass="55513">MVTIRADEISNIIRERIEQYNREVKIVNTGTVLQVGDGIARIYGLDEVMAGELVEFEEGTIGIALNLESNNVGVVLMGDGLMIQEGSSVKATGRIAQIPVSEAYLGRVINALAKPIDGRGEIYASESRLIESPAPGIISRRSVYEPLQTGLIAIDSMIPIGRGQRELIIGDRQTGKTAVATDTILNQQGQNVICVYVAIGQKASSVAQVVNTLQERGAMEYTIVVAETADSPATLQYLAPYTGAALAEYFMFRERHTLIIYDDLSKQAQAYRQMSLLLRRPPGREAYPGDVFYLHSRLLERAAKLSSLLGEGSMTALPIVETQSGDVSAYIPTNVISITDGQIFLSADLFNAGIRPAINVGISVSRVGSAAQIKAMKQVAGKLKLELAQFAELEAFAQFASDLDKATQNQLARGQRLRELLKQSQAAPLTVEEQIMTIYTGTNGYLDSLEIGQVRKFLVELRTYVKTNKPQFQEIISSTKTFTEEAEALLKEAIQEQKERFLLQEQG</sequence>
<keyword id="KW-0066">ATP synthesis</keyword>
<keyword id="KW-0067">ATP-binding</keyword>
<keyword id="KW-0139">CF(1)</keyword>
<keyword id="KW-0150">Chloroplast</keyword>
<keyword id="KW-0375">Hydrogen ion transport</keyword>
<keyword id="KW-0406">Ion transport</keyword>
<keyword id="KW-0472">Membrane</keyword>
<keyword id="KW-0547">Nucleotide-binding</keyword>
<keyword id="KW-0934">Plastid</keyword>
<keyword id="KW-0793">Thylakoid</keyword>
<keyword id="KW-1278">Translocase</keyword>
<keyword id="KW-0813">Transport</keyword>
<geneLocation type="chloroplast"/>
<gene>
    <name evidence="1" type="primary">atpA</name>
</gene>
<accession>Q49L13</accession>
<evidence type="ECO:0000255" key="1">
    <source>
        <dbReference type="HAMAP-Rule" id="MF_01346"/>
    </source>
</evidence>
<dbReference type="EC" id="7.1.2.2" evidence="1"/>
<dbReference type="EMBL" id="AY780259">
    <property type="protein sequence ID" value="AAX21014.1"/>
    <property type="molecule type" value="Genomic_DNA"/>
</dbReference>
<dbReference type="RefSeq" id="YP_636284.1">
    <property type="nucleotide sequence ID" value="NC_008115.1"/>
</dbReference>
<dbReference type="SMR" id="Q49L13"/>
<dbReference type="GeneID" id="4108477"/>
<dbReference type="GO" id="GO:0009535">
    <property type="term" value="C:chloroplast thylakoid membrane"/>
    <property type="evidence" value="ECO:0007669"/>
    <property type="project" value="UniProtKB-SubCell"/>
</dbReference>
<dbReference type="GO" id="GO:0045259">
    <property type="term" value="C:proton-transporting ATP synthase complex"/>
    <property type="evidence" value="ECO:0007669"/>
    <property type="project" value="UniProtKB-KW"/>
</dbReference>
<dbReference type="GO" id="GO:0043531">
    <property type="term" value="F:ADP binding"/>
    <property type="evidence" value="ECO:0007669"/>
    <property type="project" value="TreeGrafter"/>
</dbReference>
<dbReference type="GO" id="GO:0005524">
    <property type="term" value="F:ATP binding"/>
    <property type="evidence" value="ECO:0007669"/>
    <property type="project" value="UniProtKB-UniRule"/>
</dbReference>
<dbReference type="GO" id="GO:0046933">
    <property type="term" value="F:proton-transporting ATP synthase activity, rotational mechanism"/>
    <property type="evidence" value="ECO:0007669"/>
    <property type="project" value="UniProtKB-UniRule"/>
</dbReference>
<dbReference type="CDD" id="cd18113">
    <property type="entry name" value="ATP-synt_F1_alpha_C"/>
    <property type="match status" value="1"/>
</dbReference>
<dbReference type="CDD" id="cd18116">
    <property type="entry name" value="ATP-synt_F1_alpha_N"/>
    <property type="match status" value="1"/>
</dbReference>
<dbReference type="CDD" id="cd01132">
    <property type="entry name" value="F1-ATPase_alpha_CD"/>
    <property type="match status" value="1"/>
</dbReference>
<dbReference type="FunFam" id="1.20.150.20:FF:000001">
    <property type="entry name" value="ATP synthase subunit alpha"/>
    <property type="match status" value="1"/>
</dbReference>
<dbReference type="FunFam" id="2.40.30.20:FF:000001">
    <property type="entry name" value="ATP synthase subunit alpha"/>
    <property type="match status" value="1"/>
</dbReference>
<dbReference type="FunFam" id="3.40.50.300:FF:000002">
    <property type="entry name" value="ATP synthase subunit alpha"/>
    <property type="match status" value="1"/>
</dbReference>
<dbReference type="Gene3D" id="2.40.30.20">
    <property type="match status" value="1"/>
</dbReference>
<dbReference type="Gene3D" id="1.20.150.20">
    <property type="entry name" value="ATP synthase alpha/beta chain, C-terminal domain"/>
    <property type="match status" value="1"/>
</dbReference>
<dbReference type="Gene3D" id="3.40.50.300">
    <property type="entry name" value="P-loop containing nucleotide triphosphate hydrolases"/>
    <property type="match status" value="1"/>
</dbReference>
<dbReference type="HAMAP" id="MF_01346">
    <property type="entry name" value="ATP_synth_alpha_bact"/>
    <property type="match status" value="1"/>
</dbReference>
<dbReference type="InterPro" id="IPR023366">
    <property type="entry name" value="ATP_synth_asu-like_sf"/>
</dbReference>
<dbReference type="InterPro" id="IPR000793">
    <property type="entry name" value="ATP_synth_asu_C"/>
</dbReference>
<dbReference type="InterPro" id="IPR038376">
    <property type="entry name" value="ATP_synth_asu_C_sf"/>
</dbReference>
<dbReference type="InterPro" id="IPR033732">
    <property type="entry name" value="ATP_synth_F1_a_nt-bd_dom"/>
</dbReference>
<dbReference type="InterPro" id="IPR005294">
    <property type="entry name" value="ATP_synth_F1_asu"/>
</dbReference>
<dbReference type="InterPro" id="IPR020003">
    <property type="entry name" value="ATPase_a/bsu_AS"/>
</dbReference>
<dbReference type="InterPro" id="IPR004100">
    <property type="entry name" value="ATPase_F1/V1/A1_a/bsu_N"/>
</dbReference>
<dbReference type="InterPro" id="IPR036121">
    <property type="entry name" value="ATPase_F1/V1/A1_a/bsu_N_sf"/>
</dbReference>
<dbReference type="InterPro" id="IPR000194">
    <property type="entry name" value="ATPase_F1/V1/A1_a/bsu_nucl-bd"/>
</dbReference>
<dbReference type="InterPro" id="IPR027417">
    <property type="entry name" value="P-loop_NTPase"/>
</dbReference>
<dbReference type="NCBIfam" id="TIGR00962">
    <property type="entry name" value="atpA"/>
    <property type="match status" value="1"/>
</dbReference>
<dbReference type="NCBIfam" id="NF009884">
    <property type="entry name" value="PRK13343.1"/>
    <property type="match status" value="1"/>
</dbReference>
<dbReference type="PANTHER" id="PTHR48082">
    <property type="entry name" value="ATP SYNTHASE SUBUNIT ALPHA, MITOCHONDRIAL"/>
    <property type="match status" value="1"/>
</dbReference>
<dbReference type="PANTHER" id="PTHR48082:SF2">
    <property type="entry name" value="ATP SYNTHASE SUBUNIT ALPHA, MITOCHONDRIAL"/>
    <property type="match status" value="1"/>
</dbReference>
<dbReference type="Pfam" id="PF00006">
    <property type="entry name" value="ATP-synt_ab"/>
    <property type="match status" value="1"/>
</dbReference>
<dbReference type="Pfam" id="PF00306">
    <property type="entry name" value="ATP-synt_ab_C"/>
    <property type="match status" value="1"/>
</dbReference>
<dbReference type="Pfam" id="PF02874">
    <property type="entry name" value="ATP-synt_ab_N"/>
    <property type="match status" value="1"/>
</dbReference>
<dbReference type="PIRSF" id="PIRSF039088">
    <property type="entry name" value="F_ATPase_subunit_alpha"/>
    <property type="match status" value="1"/>
</dbReference>
<dbReference type="SUPFAM" id="SSF47917">
    <property type="entry name" value="C-terminal domain of alpha and beta subunits of F1 ATP synthase"/>
    <property type="match status" value="1"/>
</dbReference>
<dbReference type="SUPFAM" id="SSF50615">
    <property type="entry name" value="N-terminal domain of alpha and beta subunits of F1 ATP synthase"/>
    <property type="match status" value="1"/>
</dbReference>
<dbReference type="SUPFAM" id="SSF52540">
    <property type="entry name" value="P-loop containing nucleoside triphosphate hydrolases"/>
    <property type="match status" value="1"/>
</dbReference>
<dbReference type="PROSITE" id="PS00152">
    <property type="entry name" value="ATPASE_ALPHA_BETA"/>
    <property type="match status" value="1"/>
</dbReference>
<comment type="function">
    <text evidence="1">Produces ATP from ADP in the presence of a proton gradient across the membrane. The alpha chain is a regulatory subunit.</text>
</comment>
<comment type="catalytic activity">
    <reaction evidence="1">
        <text>ATP + H2O + 4 H(+)(in) = ADP + phosphate + 5 H(+)(out)</text>
        <dbReference type="Rhea" id="RHEA:57720"/>
        <dbReference type="ChEBI" id="CHEBI:15377"/>
        <dbReference type="ChEBI" id="CHEBI:15378"/>
        <dbReference type="ChEBI" id="CHEBI:30616"/>
        <dbReference type="ChEBI" id="CHEBI:43474"/>
        <dbReference type="ChEBI" id="CHEBI:456216"/>
        <dbReference type="EC" id="7.1.2.2"/>
    </reaction>
</comment>
<comment type="subunit">
    <text evidence="1">F-type ATPases have 2 components, CF(1) - the catalytic core - and CF(0) - the membrane proton channel. CF(1) has five subunits: alpha(3), beta(3), gamma(1), delta(1), epsilon(1). CF(0) has four main subunits: a, b, b' and c.</text>
</comment>
<comment type="subcellular location">
    <subcellularLocation>
        <location evidence="1">Plastid</location>
        <location evidence="1">Chloroplast thylakoid membrane</location>
        <topology evidence="1">Peripheral membrane protein</topology>
    </subcellularLocation>
</comment>
<comment type="similarity">
    <text evidence="1">Belongs to the ATPase alpha/beta chains family.</text>
</comment>
<proteinExistence type="inferred from homology"/>
<name>ATPA_EUCGG</name>